<reference key="1">
    <citation type="submission" date="2007-11" db="EMBL/GenBank/DDBJ databases">
        <authorList>
            <consortium name="The Salmonella enterica serovar Arizonae Genome Sequencing Project"/>
            <person name="McClelland M."/>
            <person name="Sanderson E.K."/>
            <person name="Porwollik S."/>
            <person name="Spieth J."/>
            <person name="Clifton W.S."/>
            <person name="Fulton R."/>
            <person name="Chunyan W."/>
            <person name="Wollam A."/>
            <person name="Shah N."/>
            <person name="Pepin K."/>
            <person name="Bhonagiri V."/>
            <person name="Nash W."/>
            <person name="Johnson M."/>
            <person name="Thiruvilangam P."/>
            <person name="Wilson R."/>
        </authorList>
    </citation>
    <scope>NUCLEOTIDE SEQUENCE [LARGE SCALE GENOMIC DNA]</scope>
    <source>
        <strain>ATCC BAA-731 / CDC346-86 / RSK2980</strain>
    </source>
</reference>
<evidence type="ECO:0000255" key="1">
    <source>
        <dbReference type="HAMAP-Rule" id="MF_01318"/>
    </source>
</evidence>
<evidence type="ECO:0000305" key="2"/>
<name>RL1_SALAR</name>
<comment type="function">
    <text evidence="1">Binds directly to 23S rRNA. The L1 stalk is quite mobile in the ribosome, and is involved in E site tRNA release.</text>
</comment>
<comment type="function">
    <text evidence="1">Protein L1 is also a translational repressor protein, it controls the translation of the L11 operon by binding to its mRNA.</text>
</comment>
<comment type="subunit">
    <text evidence="1">Part of the 50S ribosomal subunit.</text>
</comment>
<comment type="similarity">
    <text evidence="1">Belongs to the universal ribosomal protein uL1 family.</text>
</comment>
<accession>A9MHF5</accession>
<sequence>MAKLTKRMRVIREKVDATKQYDINEAISLLKELATAKFVESVDVAVNLGIDARKSDQNVRGATVLPHGTGRSVRVAVFTQGANAEAAKAAGAELVGMEDLAEQIKKGEMNFDVVIASPDAMRVVGQLGQVLGPRGLMPNPKVGTVTPNVAEAVKNAKAGQVRYRNDKNGIIHTTIGKVDFDADKLKENLEALLVALKKAKPSQAKGVYIKKVSISTTMGAGVAVDQAGLSASAN</sequence>
<keyword id="KW-1185">Reference proteome</keyword>
<keyword id="KW-0678">Repressor</keyword>
<keyword id="KW-0687">Ribonucleoprotein</keyword>
<keyword id="KW-0689">Ribosomal protein</keyword>
<keyword id="KW-0694">RNA-binding</keyword>
<keyword id="KW-0699">rRNA-binding</keyword>
<keyword id="KW-0810">Translation regulation</keyword>
<keyword id="KW-0820">tRNA-binding</keyword>
<feature type="chain" id="PRO_1000086302" description="Large ribosomal subunit protein uL1">
    <location>
        <begin position="1"/>
        <end position="234"/>
    </location>
</feature>
<gene>
    <name evidence="1" type="primary">rplA</name>
    <name type="ordered locus">SARI_03514</name>
</gene>
<organism>
    <name type="scientific">Salmonella arizonae (strain ATCC BAA-731 / CDC346-86 / RSK2980)</name>
    <dbReference type="NCBI Taxonomy" id="41514"/>
    <lineage>
        <taxon>Bacteria</taxon>
        <taxon>Pseudomonadati</taxon>
        <taxon>Pseudomonadota</taxon>
        <taxon>Gammaproteobacteria</taxon>
        <taxon>Enterobacterales</taxon>
        <taxon>Enterobacteriaceae</taxon>
        <taxon>Salmonella</taxon>
    </lineage>
</organism>
<protein>
    <recommendedName>
        <fullName evidence="1">Large ribosomal subunit protein uL1</fullName>
    </recommendedName>
    <alternativeName>
        <fullName evidence="2">50S ribosomal protein L1</fullName>
    </alternativeName>
</protein>
<proteinExistence type="inferred from homology"/>
<dbReference type="EMBL" id="CP000880">
    <property type="protein sequence ID" value="ABX23339.1"/>
    <property type="molecule type" value="Genomic_DNA"/>
</dbReference>
<dbReference type="SMR" id="A9MHF5"/>
<dbReference type="STRING" id="41514.SARI_03514"/>
<dbReference type="KEGG" id="ses:SARI_03514"/>
<dbReference type="HOGENOM" id="CLU_062853_0_0_6"/>
<dbReference type="Proteomes" id="UP000002084">
    <property type="component" value="Chromosome"/>
</dbReference>
<dbReference type="GO" id="GO:0022625">
    <property type="term" value="C:cytosolic large ribosomal subunit"/>
    <property type="evidence" value="ECO:0007669"/>
    <property type="project" value="TreeGrafter"/>
</dbReference>
<dbReference type="GO" id="GO:0019843">
    <property type="term" value="F:rRNA binding"/>
    <property type="evidence" value="ECO:0007669"/>
    <property type="project" value="UniProtKB-UniRule"/>
</dbReference>
<dbReference type="GO" id="GO:0003735">
    <property type="term" value="F:structural constituent of ribosome"/>
    <property type="evidence" value="ECO:0007669"/>
    <property type="project" value="InterPro"/>
</dbReference>
<dbReference type="GO" id="GO:0000049">
    <property type="term" value="F:tRNA binding"/>
    <property type="evidence" value="ECO:0007669"/>
    <property type="project" value="UniProtKB-KW"/>
</dbReference>
<dbReference type="GO" id="GO:0006417">
    <property type="term" value="P:regulation of translation"/>
    <property type="evidence" value="ECO:0007669"/>
    <property type="project" value="UniProtKB-KW"/>
</dbReference>
<dbReference type="GO" id="GO:0006412">
    <property type="term" value="P:translation"/>
    <property type="evidence" value="ECO:0007669"/>
    <property type="project" value="UniProtKB-UniRule"/>
</dbReference>
<dbReference type="CDD" id="cd00403">
    <property type="entry name" value="Ribosomal_L1"/>
    <property type="match status" value="1"/>
</dbReference>
<dbReference type="FunFam" id="3.40.50.790:FF:000001">
    <property type="entry name" value="50S ribosomal protein L1"/>
    <property type="match status" value="1"/>
</dbReference>
<dbReference type="Gene3D" id="3.30.190.20">
    <property type="match status" value="1"/>
</dbReference>
<dbReference type="Gene3D" id="3.40.50.790">
    <property type="match status" value="1"/>
</dbReference>
<dbReference type="HAMAP" id="MF_01318_B">
    <property type="entry name" value="Ribosomal_uL1_B"/>
    <property type="match status" value="1"/>
</dbReference>
<dbReference type="InterPro" id="IPR005878">
    <property type="entry name" value="Ribosom_uL1_bac-type"/>
</dbReference>
<dbReference type="InterPro" id="IPR002143">
    <property type="entry name" value="Ribosomal_uL1"/>
</dbReference>
<dbReference type="InterPro" id="IPR023674">
    <property type="entry name" value="Ribosomal_uL1-like"/>
</dbReference>
<dbReference type="InterPro" id="IPR028364">
    <property type="entry name" value="Ribosomal_uL1/biogenesis"/>
</dbReference>
<dbReference type="InterPro" id="IPR016095">
    <property type="entry name" value="Ribosomal_uL1_3-a/b-sand"/>
</dbReference>
<dbReference type="InterPro" id="IPR023673">
    <property type="entry name" value="Ribosomal_uL1_CS"/>
</dbReference>
<dbReference type="NCBIfam" id="TIGR01169">
    <property type="entry name" value="rplA_bact"/>
    <property type="match status" value="1"/>
</dbReference>
<dbReference type="PANTHER" id="PTHR36427">
    <property type="entry name" value="54S RIBOSOMAL PROTEIN L1, MITOCHONDRIAL"/>
    <property type="match status" value="1"/>
</dbReference>
<dbReference type="PANTHER" id="PTHR36427:SF3">
    <property type="entry name" value="LARGE RIBOSOMAL SUBUNIT PROTEIN UL1M"/>
    <property type="match status" value="1"/>
</dbReference>
<dbReference type="Pfam" id="PF00687">
    <property type="entry name" value="Ribosomal_L1"/>
    <property type="match status" value="1"/>
</dbReference>
<dbReference type="PIRSF" id="PIRSF002155">
    <property type="entry name" value="Ribosomal_L1"/>
    <property type="match status" value="1"/>
</dbReference>
<dbReference type="SUPFAM" id="SSF56808">
    <property type="entry name" value="Ribosomal protein L1"/>
    <property type="match status" value="1"/>
</dbReference>
<dbReference type="PROSITE" id="PS01199">
    <property type="entry name" value="RIBOSOMAL_L1"/>
    <property type="match status" value="1"/>
</dbReference>